<feature type="chain" id="PRO_1000084630" description="tRNA pseudouridine synthase B">
    <location>
        <begin position="1"/>
        <end position="275"/>
    </location>
</feature>
<feature type="active site" description="Nucleophile" evidence="1">
    <location>
        <position position="38"/>
    </location>
</feature>
<dbReference type="EC" id="5.4.99.25" evidence="1"/>
<dbReference type="EMBL" id="AP009178">
    <property type="protein sequence ID" value="BAF70581.1"/>
    <property type="molecule type" value="Genomic_DNA"/>
</dbReference>
<dbReference type="RefSeq" id="WP_012082844.1">
    <property type="nucleotide sequence ID" value="NC_009662.1"/>
</dbReference>
<dbReference type="SMR" id="A6Q522"/>
<dbReference type="FunCoup" id="A6Q522">
    <property type="interactions" value="434"/>
</dbReference>
<dbReference type="STRING" id="387092.NIS_1474"/>
<dbReference type="KEGG" id="nis:NIS_1474"/>
<dbReference type="eggNOG" id="COG0130">
    <property type="taxonomic scope" value="Bacteria"/>
</dbReference>
<dbReference type="HOGENOM" id="CLU_032087_2_0_7"/>
<dbReference type="InParanoid" id="A6Q522"/>
<dbReference type="OrthoDB" id="9802309at2"/>
<dbReference type="Proteomes" id="UP000001118">
    <property type="component" value="Chromosome"/>
</dbReference>
<dbReference type="GO" id="GO:0003723">
    <property type="term" value="F:RNA binding"/>
    <property type="evidence" value="ECO:0007669"/>
    <property type="project" value="InterPro"/>
</dbReference>
<dbReference type="GO" id="GO:0160148">
    <property type="term" value="F:tRNA pseudouridine(55) synthase activity"/>
    <property type="evidence" value="ECO:0007669"/>
    <property type="project" value="UniProtKB-EC"/>
</dbReference>
<dbReference type="GO" id="GO:1990481">
    <property type="term" value="P:mRNA pseudouridine synthesis"/>
    <property type="evidence" value="ECO:0007669"/>
    <property type="project" value="TreeGrafter"/>
</dbReference>
<dbReference type="GO" id="GO:0031119">
    <property type="term" value="P:tRNA pseudouridine synthesis"/>
    <property type="evidence" value="ECO:0007669"/>
    <property type="project" value="UniProtKB-UniRule"/>
</dbReference>
<dbReference type="Gene3D" id="3.30.2350.10">
    <property type="entry name" value="Pseudouridine synthase"/>
    <property type="match status" value="1"/>
</dbReference>
<dbReference type="HAMAP" id="MF_01080">
    <property type="entry name" value="TruB_bact"/>
    <property type="match status" value="1"/>
</dbReference>
<dbReference type="InterPro" id="IPR020103">
    <property type="entry name" value="PsdUridine_synth_cat_dom_sf"/>
</dbReference>
<dbReference type="InterPro" id="IPR002501">
    <property type="entry name" value="PsdUridine_synth_N"/>
</dbReference>
<dbReference type="InterPro" id="IPR014780">
    <property type="entry name" value="tRNA_psdUridine_synth_TruB"/>
</dbReference>
<dbReference type="NCBIfam" id="TIGR00431">
    <property type="entry name" value="TruB"/>
    <property type="match status" value="1"/>
</dbReference>
<dbReference type="PANTHER" id="PTHR13767:SF2">
    <property type="entry name" value="PSEUDOURIDYLATE SYNTHASE TRUB1"/>
    <property type="match status" value="1"/>
</dbReference>
<dbReference type="PANTHER" id="PTHR13767">
    <property type="entry name" value="TRNA-PSEUDOURIDINE SYNTHASE"/>
    <property type="match status" value="1"/>
</dbReference>
<dbReference type="Pfam" id="PF01509">
    <property type="entry name" value="TruB_N"/>
    <property type="match status" value="1"/>
</dbReference>
<dbReference type="SUPFAM" id="SSF55120">
    <property type="entry name" value="Pseudouridine synthase"/>
    <property type="match status" value="1"/>
</dbReference>
<organism>
    <name type="scientific">Nitratiruptor sp. (strain SB155-2)</name>
    <dbReference type="NCBI Taxonomy" id="387092"/>
    <lineage>
        <taxon>Bacteria</taxon>
        <taxon>Pseudomonadati</taxon>
        <taxon>Campylobacterota</taxon>
        <taxon>Epsilonproteobacteria</taxon>
        <taxon>Nautiliales</taxon>
        <taxon>Nitratiruptoraceae</taxon>
        <taxon>Nitratiruptor</taxon>
    </lineage>
</organism>
<accession>A6Q522</accession>
<reference key="1">
    <citation type="journal article" date="2007" name="Proc. Natl. Acad. Sci. U.S.A.">
        <title>Deep-sea vent epsilon-proteobacterial genomes provide insights into emergence of pathogens.</title>
        <authorList>
            <person name="Nakagawa S."/>
            <person name="Takaki Y."/>
            <person name="Shimamura S."/>
            <person name="Reysenbach A.-L."/>
            <person name="Takai K."/>
            <person name="Horikoshi K."/>
        </authorList>
    </citation>
    <scope>NUCLEOTIDE SEQUENCE [LARGE SCALE GENOMIC DNA]</scope>
    <source>
        <strain>SB155-2</strain>
    </source>
</reference>
<name>TRUB_NITSB</name>
<proteinExistence type="inferred from homology"/>
<sequence>MNRLFVAYKPPFVSSNAFLHKIKKRYRVKKAGFSGTLDPFACGTLIIAFGAYTKLFRFLQKYPKRYRTTIWLGASSPSLDIEKIESIQDVPPLDERTIKDIINSFVGEFTYIPPLFSAKKVGGKRAYHFAARGKQIDLKPVTSTIEEISFVHYRHPFITFEATVSEGTYIRSLAEAIAKKLGFPGTLSYLERLAEGKFVYENENPLDPVQYLRTKQNFVKKSKEAIFHGAKLTIDDLAYKEDGEYHILFDDFFAIIRVEKKKVRYLLNQIPRKYQ</sequence>
<comment type="function">
    <text evidence="1">Responsible for synthesis of pseudouridine from uracil-55 in the psi GC loop of transfer RNAs.</text>
</comment>
<comment type="catalytic activity">
    <reaction evidence="1">
        <text>uridine(55) in tRNA = pseudouridine(55) in tRNA</text>
        <dbReference type="Rhea" id="RHEA:42532"/>
        <dbReference type="Rhea" id="RHEA-COMP:10101"/>
        <dbReference type="Rhea" id="RHEA-COMP:10102"/>
        <dbReference type="ChEBI" id="CHEBI:65314"/>
        <dbReference type="ChEBI" id="CHEBI:65315"/>
        <dbReference type="EC" id="5.4.99.25"/>
    </reaction>
</comment>
<comment type="similarity">
    <text evidence="1">Belongs to the pseudouridine synthase TruB family. Type 1 subfamily.</text>
</comment>
<keyword id="KW-0413">Isomerase</keyword>
<keyword id="KW-1185">Reference proteome</keyword>
<keyword id="KW-0819">tRNA processing</keyword>
<evidence type="ECO:0000255" key="1">
    <source>
        <dbReference type="HAMAP-Rule" id="MF_01080"/>
    </source>
</evidence>
<protein>
    <recommendedName>
        <fullName evidence="1">tRNA pseudouridine synthase B</fullName>
        <ecNumber evidence="1">5.4.99.25</ecNumber>
    </recommendedName>
    <alternativeName>
        <fullName evidence="1">tRNA pseudouridine(55) synthase</fullName>
        <shortName evidence="1">Psi55 synthase</shortName>
    </alternativeName>
    <alternativeName>
        <fullName evidence="1">tRNA pseudouridylate synthase</fullName>
    </alternativeName>
    <alternativeName>
        <fullName evidence="1">tRNA-uridine isomerase</fullName>
    </alternativeName>
</protein>
<gene>
    <name evidence="1" type="primary">truB</name>
    <name type="ordered locus">NIS_1474</name>
</gene>